<dbReference type="EC" id="1.3.1.9" evidence="1"/>
<dbReference type="EMBL" id="CP000685">
    <property type="protein sequence ID" value="ABQ06478.1"/>
    <property type="molecule type" value="Genomic_DNA"/>
</dbReference>
<dbReference type="RefSeq" id="WP_012025447.1">
    <property type="nucleotide sequence ID" value="NZ_MUGZ01000038.1"/>
</dbReference>
<dbReference type="SMR" id="A5FE91"/>
<dbReference type="STRING" id="376686.Fjoh_3464"/>
<dbReference type="KEGG" id="fjo:Fjoh_3464"/>
<dbReference type="eggNOG" id="COG3007">
    <property type="taxonomic scope" value="Bacteria"/>
</dbReference>
<dbReference type="HOGENOM" id="CLU_057698_1_0_10"/>
<dbReference type="OrthoDB" id="9802260at2"/>
<dbReference type="UniPathway" id="UPA00094"/>
<dbReference type="Proteomes" id="UP000006694">
    <property type="component" value="Chromosome"/>
</dbReference>
<dbReference type="GO" id="GO:0004318">
    <property type="term" value="F:enoyl-[acyl-carrier-protein] reductase (NADH) activity"/>
    <property type="evidence" value="ECO:0007669"/>
    <property type="project" value="UniProtKB-UniRule"/>
</dbReference>
<dbReference type="GO" id="GO:0051287">
    <property type="term" value="F:NAD binding"/>
    <property type="evidence" value="ECO:0007669"/>
    <property type="project" value="UniProtKB-UniRule"/>
</dbReference>
<dbReference type="GO" id="GO:0050343">
    <property type="term" value="F:trans-2-enoyl-CoA reductase (NADH) activity"/>
    <property type="evidence" value="ECO:0007669"/>
    <property type="project" value="TreeGrafter"/>
</dbReference>
<dbReference type="GO" id="GO:0006633">
    <property type="term" value="P:fatty acid biosynthetic process"/>
    <property type="evidence" value="ECO:0007669"/>
    <property type="project" value="UniProtKB-UniRule"/>
</dbReference>
<dbReference type="FunFam" id="3.40.50.720:FF:000221">
    <property type="entry name" value="Enoyl-[acyl-carrier-protein] reductase [NADH]"/>
    <property type="match status" value="1"/>
</dbReference>
<dbReference type="Gene3D" id="3.40.50.720">
    <property type="entry name" value="NAD(P)-binding Rossmann-like Domain"/>
    <property type="match status" value="1"/>
</dbReference>
<dbReference type="HAMAP" id="MF_01838">
    <property type="entry name" value="FabV_reductase"/>
    <property type="match status" value="1"/>
</dbReference>
<dbReference type="InterPro" id="IPR024906">
    <property type="entry name" value="Eno_Rdtase_FAD-bd_dom"/>
</dbReference>
<dbReference type="InterPro" id="IPR024910">
    <property type="entry name" value="Enoyl-CoA_Rdtase_cat_dom"/>
</dbReference>
<dbReference type="InterPro" id="IPR050048">
    <property type="entry name" value="FabV-like_NADH_b"/>
</dbReference>
<dbReference type="InterPro" id="IPR010758">
    <property type="entry name" value="Trans-2-enoyl-CoA_reductase"/>
</dbReference>
<dbReference type="NCBIfam" id="NF043048">
    <property type="entry name" value="EnoyACPredFabV"/>
    <property type="match status" value="1"/>
</dbReference>
<dbReference type="NCBIfam" id="NF010177">
    <property type="entry name" value="PRK13656.1"/>
    <property type="match status" value="1"/>
</dbReference>
<dbReference type="PANTHER" id="PTHR37480">
    <property type="entry name" value="ENOYL-[ACYL-CARRIER-PROTEIN] REDUCTASE [NADH]"/>
    <property type="match status" value="1"/>
</dbReference>
<dbReference type="PANTHER" id="PTHR37480:SF1">
    <property type="entry name" value="ENOYL-[ACYL-CARRIER-PROTEIN] REDUCTASE [NADH]"/>
    <property type="match status" value="1"/>
</dbReference>
<dbReference type="Pfam" id="PF07055">
    <property type="entry name" value="Eno-Rase_FAD_bd"/>
    <property type="match status" value="1"/>
</dbReference>
<dbReference type="Pfam" id="PF12242">
    <property type="entry name" value="Eno-Rase_NADH_b"/>
    <property type="match status" value="1"/>
</dbReference>
<dbReference type="Pfam" id="PF12241">
    <property type="entry name" value="Enoyl_reductase"/>
    <property type="match status" value="1"/>
</dbReference>
<keyword id="KW-0275">Fatty acid biosynthesis</keyword>
<keyword id="KW-0276">Fatty acid metabolism</keyword>
<keyword id="KW-0444">Lipid biosynthesis</keyword>
<keyword id="KW-0443">Lipid metabolism</keyword>
<keyword id="KW-0520">NAD</keyword>
<keyword id="KW-0560">Oxidoreductase</keyword>
<gene>
    <name evidence="1" type="primary">fabV</name>
    <name type="ordered locus">Fjoh_3464</name>
</gene>
<feature type="chain" id="PRO_1000088453" description="Enoyl-[acyl-carrier-protein] reductase [NADH]">
    <location>
        <begin position="1"/>
        <end position="396"/>
    </location>
</feature>
<feature type="active site" description="Proton donor" evidence="1">
    <location>
        <position position="234"/>
    </location>
</feature>
<feature type="binding site" evidence="1">
    <location>
        <begin position="47"/>
        <end position="52"/>
    </location>
    <ligand>
        <name>NAD(+)</name>
        <dbReference type="ChEBI" id="CHEBI:57540"/>
    </ligand>
</feature>
<feature type="binding site" evidence="1">
    <location>
        <begin position="73"/>
        <end position="74"/>
    </location>
    <ligand>
        <name>NAD(+)</name>
        <dbReference type="ChEBI" id="CHEBI:57540"/>
    </ligand>
</feature>
<feature type="binding site" evidence="1">
    <location>
        <begin position="110"/>
        <end position="111"/>
    </location>
    <ligand>
        <name>NAD(+)</name>
        <dbReference type="ChEBI" id="CHEBI:57540"/>
    </ligand>
</feature>
<feature type="binding site" evidence="1">
    <location>
        <begin position="138"/>
        <end position="139"/>
    </location>
    <ligand>
        <name>NAD(+)</name>
        <dbReference type="ChEBI" id="CHEBI:57540"/>
    </ligand>
</feature>
<feature type="binding site" evidence="1">
    <location>
        <position position="224"/>
    </location>
    <ligand>
        <name>substrate</name>
    </ligand>
</feature>
<feature type="binding site" evidence="1">
    <location>
        <position position="243"/>
    </location>
    <ligand>
        <name>NAD(+)</name>
        <dbReference type="ChEBI" id="CHEBI:57540"/>
    </ligand>
</feature>
<feature type="binding site" evidence="1">
    <location>
        <begin position="272"/>
        <end position="274"/>
    </location>
    <ligand>
        <name>NAD(+)</name>
        <dbReference type="ChEBI" id="CHEBI:57540"/>
    </ligand>
</feature>
<feature type="site" description="Plays an important role in discriminating NADH against NADPH" evidence="1">
    <location>
        <position position="74"/>
    </location>
</feature>
<evidence type="ECO:0000255" key="1">
    <source>
        <dbReference type="HAMAP-Rule" id="MF_01838"/>
    </source>
</evidence>
<organism>
    <name type="scientific">Flavobacterium johnsoniae (strain ATCC 17061 / DSM 2064 / JCM 8514 / BCRC 14874 / CCUG 350202 / NBRC 14942 / NCIMB 11054 / UW101)</name>
    <name type="common">Cytophaga johnsonae</name>
    <dbReference type="NCBI Taxonomy" id="376686"/>
    <lineage>
        <taxon>Bacteria</taxon>
        <taxon>Pseudomonadati</taxon>
        <taxon>Bacteroidota</taxon>
        <taxon>Flavobacteriia</taxon>
        <taxon>Flavobacteriales</taxon>
        <taxon>Flavobacteriaceae</taxon>
        <taxon>Flavobacterium</taxon>
    </lineage>
</organism>
<proteinExistence type="inferred from homology"/>
<name>FABV_FLAJ1</name>
<accession>A5FE91</accession>
<protein>
    <recommendedName>
        <fullName evidence="1">Enoyl-[acyl-carrier-protein] reductase [NADH]</fullName>
        <shortName evidence="1">ENR</shortName>
        <ecNumber evidence="1">1.3.1.9</ecNumber>
    </recommendedName>
</protein>
<sequence>MIIEPRMRGFICLTAHPAGCEQNVKNQIEYIKSKGAIAGAKKVLVIGASTGFGLASRITSAFGSDAATIGVFFEKPPVEGKTASPGWYNSAAFEKEAHKAGLYAKSINGDAFSNEIKRETLDLIKADLGQVDLVIYSLASPVRTNPNTGVTHRSVLKPIGQTFTNKTVDFHTGNVSEVSIAPANEEDIENTVAVMGGEDWAMWIDALKNENLLAEGATTIAYSYIGPELTEAVYRKGTIGRAKDHLEATAFTITDTLKSLGGKAYVSVNKALVTQASSAIPVIPLYISLLYKIMKEEGIHEGCIEQIQRLFQDRLYNGSEVPVDEKGRIRIDDWEMREDVQAKVAALWKEATTETLPSIGDLAGYRNDFLNLFGFEFAGVDYKADTNEVVNIESIK</sequence>
<comment type="function">
    <text evidence="1">Involved in the final reduction of the elongation cycle of fatty acid synthesis (FAS II). Catalyzes the reduction of a carbon-carbon double bond in an enoyl moiety that is covalently linked to an acyl carrier protein (ACP).</text>
</comment>
<comment type="catalytic activity">
    <reaction evidence="1">
        <text>a 2,3-saturated acyl-[ACP] + NAD(+) = a (2E)-enoyl-[ACP] + NADH + H(+)</text>
        <dbReference type="Rhea" id="RHEA:10240"/>
        <dbReference type="Rhea" id="RHEA-COMP:9925"/>
        <dbReference type="Rhea" id="RHEA-COMP:9926"/>
        <dbReference type="ChEBI" id="CHEBI:15378"/>
        <dbReference type="ChEBI" id="CHEBI:57540"/>
        <dbReference type="ChEBI" id="CHEBI:57945"/>
        <dbReference type="ChEBI" id="CHEBI:78784"/>
        <dbReference type="ChEBI" id="CHEBI:78785"/>
        <dbReference type="EC" id="1.3.1.9"/>
    </reaction>
</comment>
<comment type="pathway">
    <text evidence="1">Lipid metabolism; fatty acid biosynthesis.</text>
</comment>
<comment type="subunit">
    <text evidence="1">Monomer.</text>
</comment>
<comment type="similarity">
    <text evidence="1">Belongs to the TER reductase family.</text>
</comment>
<reference key="1">
    <citation type="journal article" date="2009" name="Appl. Environ. Microbiol.">
        <title>Novel features of the polysaccharide-digesting gliding bacterium Flavobacterium johnsoniae as revealed by genome sequence analysis.</title>
        <authorList>
            <person name="McBride M.J."/>
            <person name="Xie G."/>
            <person name="Martens E.C."/>
            <person name="Lapidus A."/>
            <person name="Henrissat B."/>
            <person name="Rhodes R.G."/>
            <person name="Goltsman E."/>
            <person name="Wang W."/>
            <person name="Xu J."/>
            <person name="Hunnicutt D.W."/>
            <person name="Staroscik A.M."/>
            <person name="Hoover T.R."/>
            <person name="Cheng Y.Q."/>
            <person name="Stein J.L."/>
        </authorList>
    </citation>
    <scope>NUCLEOTIDE SEQUENCE [LARGE SCALE GENOMIC DNA]</scope>
    <source>
        <strain>ATCC 17061 / DSM 2064 / JCM 8514 / BCRC 14874 / CCUG 350202 / NBRC 14942 / NCIMB 11054 / UW101</strain>
    </source>
</reference>